<sequence>MDRYQELFNRLAAKNEGAFVPFVTIGDPTPEQSMKIIDTLVASGADALELGIPFSDPLADGPTIQAATIRALESGTTPIVCFELLTQIRAKYPDMPIGLLMYANLVFTAGIETFYKKCADAGVDSVLIADVPIKESEEFRVAAEKYGIHPIFIAPPNATDETLKSVSELGGGYTYLLSRAGVTGAETKAGKPIRHLVESLTKHNAPPALLGFGISEPAQVKEAIEAGAAGAISGSAVVKIIENNLSDHTAMLDNLGQFIRDMKAASKLS</sequence>
<proteinExistence type="inferred from homology"/>
<gene>
    <name evidence="1" type="primary">trpA</name>
    <name type="ordered locus">PBPRA2491</name>
</gene>
<organism>
    <name type="scientific">Photobacterium profundum (strain SS9)</name>
    <dbReference type="NCBI Taxonomy" id="298386"/>
    <lineage>
        <taxon>Bacteria</taxon>
        <taxon>Pseudomonadati</taxon>
        <taxon>Pseudomonadota</taxon>
        <taxon>Gammaproteobacteria</taxon>
        <taxon>Vibrionales</taxon>
        <taxon>Vibrionaceae</taxon>
        <taxon>Photobacterium</taxon>
    </lineage>
</organism>
<protein>
    <recommendedName>
        <fullName evidence="1">Tryptophan synthase alpha chain</fullName>
        <ecNumber evidence="1">4.2.1.20</ecNumber>
    </recommendedName>
</protein>
<name>TRPA_PHOPR</name>
<feature type="chain" id="PRO_0000098821" description="Tryptophan synthase alpha chain">
    <location>
        <begin position="1"/>
        <end position="269"/>
    </location>
</feature>
<feature type="active site" description="Proton acceptor" evidence="1">
    <location>
        <position position="49"/>
    </location>
</feature>
<feature type="active site" description="Proton acceptor" evidence="1">
    <location>
        <position position="60"/>
    </location>
</feature>
<keyword id="KW-0028">Amino-acid biosynthesis</keyword>
<keyword id="KW-0057">Aromatic amino acid biosynthesis</keyword>
<keyword id="KW-0456">Lyase</keyword>
<keyword id="KW-1185">Reference proteome</keyword>
<keyword id="KW-0822">Tryptophan biosynthesis</keyword>
<comment type="function">
    <text evidence="1">The alpha subunit is responsible for the aldol cleavage of indoleglycerol phosphate to indole and glyceraldehyde 3-phosphate.</text>
</comment>
<comment type="catalytic activity">
    <reaction evidence="1">
        <text>(1S,2R)-1-C-(indol-3-yl)glycerol 3-phosphate + L-serine = D-glyceraldehyde 3-phosphate + L-tryptophan + H2O</text>
        <dbReference type="Rhea" id="RHEA:10532"/>
        <dbReference type="ChEBI" id="CHEBI:15377"/>
        <dbReference type="ChEBI" id="CHEBI:33384"/>
        <dbReference type="ChEBI" id="CHEBI:57912"/>
        <dbReference type="ChEBI" id="CHEBI:58866"/>
        <dbReference type="ChEBI" id="CHEBI:59776"/>
        <dbReference type="EC" id="4.2.1.20"/>
    </reaction>
</comment>
<comment type="pathway">
    <text evidence="1">Amino-acid biosynthesis; L-tryptophan biosynthesis; L-tryptophan from chorismate: step 5/5.</text>
</comment>
<comment type="subunit">
    <text evidence="1">Tetramer of two alpha and two beta chains.</text>
</comment>
<comment type="similarity">
    <text evidence="1">Belongs to the TrpA family.</text>
</comment>
<accession>Q6LPA3</accession>
<evidence type="ECO:0000255" key="1">
    <source>
        <dbReference type="HAMAP-Rule" id="MF_00131"/>
    </source>
</evidence>
<reference key="1">
    <citation type="journal article" date="2005" name="Science">
        <title>Life at depth: Photobacterium profundum genome sequence and expression analysis.</title>
        <authorList>
            <person name="Vezzi A."/>
            <person name="Campanaro S."/>
            <person name="D'Angelo M."/>
            <person name="Simonato F."/>
            <person name="Vitulo N."/>
            <person name="Lauro F.M."/>
            <person name="Cestaro A."/>
            <person name="Malacrida G."/>
            <person name="Simionati B."/>
            <person name="Cannata N."/>
            <person name="Romualdi C."/>
            <person name="Bartlett D.H."/>
            <person name="Valle G."/>
        </authorList>
    </citation>
    <scope>NUCLEOTIDE SEQUENCE [LARGE SCALE GENOMIC DNA]</scope>
    <source>
        <strain>ATCC BAA-1253 / SS9</strain>
    </source>
</reference>
<dbReference type="EC" id="4.2.1.20" evidence="1"/>
<dbReference type="EMBL" id="CR378671">
    <property type="protein sequence ID" value="CAG20873.1"/>
    <property type="molecule type" value="Genomic_DNA"/>
</dbReference>
<dbReference type="RefSeq" id="WP_011219156.1">
    <property type="nucleotide sequence ID" value="NC_006370.1"/>
</dbReference>
<dbReference type="SMR" id="Q6LPA3"/>
<dbReference type="STRING" id="298386.PBPRA2491"/>
<dbReference type="KEGG" id="ppr:PBPRA2491"/>
<dbReference type="eggNOG" id="COG0159">
    <property type="taxonomic scope" value="Bacteria"/>
</dbReference>
<dbReference type="HOGENOM" id="CLU_016734_0_4_6"/>
<dbReference type="UniPathway" id="UPA00035">
    <property type="reaction ID" value="UER00044"/>
</dbReference>
<dbReference type="Proteomes" id="UP000000593">
    <property type="component" value="Chromosome 1"/>
</dbReference>
<dbReference type="GO" id="GO:0005829">
    <property type="term" value="C:cytosol"/>
    <property type="evidence" value="ECO:0007669"/>
    <property type="project" value="TreeGrafter"/>
</dbReference>
<dbReference type="GO" id="GO:0004834">
    <property type="term" value="F:tryptophan synthase activity"/>
    <property type="evidence" value="ECO:0007669"/>
    <property type="project" value="UniProtKB-UniRule"/>
</dbReference>
<dbReference type="CDD" id="cd04724">
    <property type="entry name" value="Tryptophan_synthase_alpha"/>
    <property type="match status" value="1"/>
</dbReference>
<dbReference type="FunFam" id="3.20.20.70:FF:000037">
    <property type="entry name" value="Tryptophan synthase alpha chain"/>
    <property type="match status" value="1"/>
</dbReference>
<dbReference type="Gene3D" id="3.20.20.70">
    <property type="entry name" value="Aldolase class I"/>
    <property type="match status" value="1"/>
</dbReference>
<dbReference type="HAMAP" id="MF_00131">
    <property type="entry name" value="Trp_synth_alpha"/>
    <property type="match status" value="1"/>
</dbReference>
<dbReference type="InterPro" id="IPR013785">
    <property type="entry name" value="Aldolase_TIM"/>
</dbReference>
<dbReference type="InterPro" id="IPR011060">
    <property type="entry name" value="RibuloseP-bd_barrel"/>
</dbReference>
<dbReference type="InterPro" id="IPR018204">
    <property type="entry name" value="Trp_synthase_alpha_AS"/>
</dbReference>
<dbReference type="InterPro" id="IPR002028">
    <property type="entry name" value="Trp_synthase_suA"/>
</dbReference>
<dbReference type="NCBIfam" id="TIGR00262">
    <property type="entry name" value="trpA"/>
    <property type="match status" value="1"/>
</dbReference>
<dbReference type="PANTHER" id="PTHR43406:SF1">
    <property type="entry name" value="TRYPTOPHAN SYNTHASE ALPHA CHAIN, CHLOROPLASTIC"/>
    <property type="match status" value="1"/>
</dbReference>
<dbReference type="PANTHER" id="PTHR43406">
    <property type="entry name" value="TRYPTOPHAN SYNTHASE, ALPHA CHAIN"/>
    <property type="match status" value="1"/>
</dbReference>
<dbReference type="Pfam" id="PF00290">
    <property type="entry name" value="Trp_syntA"/>
    <property type="match status" value="1"/>
</dbReference>
<dbReference type="SUPFAM" id="SSF51366">
    <property type="entry name" value="Ribulose-phoshate binding barrel"/>
    <property type="match status" value="1"/>
</dbReference>
<dbReference type="PROSITE" id="PS00167">
    <property type="entry name" value="TRP_SYNTHASE_ALPHA"/>
    <property type="match status" value="1"/>
</dbReference>